<protein>
    <recommendedName>
        <fullName evidence="1">Mycothiol acetyltransferase</fullName>
        <shortName evidence="1">MSH acetyltransferase</shortName>
        <ecNumber evidence="1">2.3.1.189</ecNumber>
    </recommendedName>
    <alternativeName>
        <fullName evidence="1">Mycothiol synthase</fullName>
    </alternativeName>
</protein>
<sequence length="303" mass="32580">MSVTVTPYDSIPFPDELVALAERSRAADGEPPFSDQTLVDIRSGRAGATCVAATDGDELVGAAVVVPQQDAASTFTVELTVAPGHRDQGVATAIAGQLRAMVDGTVEAWAHGDQPASRRLAELYGLTAVRDLLQLKRTVSGAQDIPLEVSLPQGVRIRPFEVGRDEQAWLHVNSRAFAQHPEQGRITLGDLQEREGQSWFDPRGFLLAVSEQDPDRVLGFHWTKVHPGSGDSPALGEVYAVGVDPEQQGSGLGRALTAAGINHLAQEGLCEVMLYVDADNSAAMALYESLGFERWHVDVMYRS</sequence>
<comment type="function">
    <text evidence="1">Catalyzes the transfer of acetyl from acetyl-CoA to desacetylmycothiol (Cys-GlcN-Ins) to form mycothiol.</text>
</comment>
<comment type="catalytic activity">
    <reaction evidence="1">
        <text>1D-myo-inositol 2-(L-cysteinylamino)-2-deoxy-alpha-D-glucopyranoside + acetyl-CoA = mycothiol + CoA + H(+)</text>
        <dbReference type="Rhea" id="RHEA:26172"/>
        <dbReference type="ChEBI" id="CHEBI:15378"/>
        <dbReference type="ChEBI" id="CHEBI:16768"/>
        <dbReference type="ChEBI" id="CHEBI:57287"/>
        <dbReference type="ChEBI" id="CHEBI:57288"/>
        <dbReference type="ChEBI" id="CHEBI:58887"/>
        <dbReference type="EC" id="2.3.1.189"/>
    </reaction>
</comment>
<comment type="subunit">
    <text evidence="1">Monomer.</text>
</comment>
<comment type="similarity">
    <text evidence="1">Belongs to the acetyltransferase family. MshD subfamily.</text>
</comment>
<dbReference type="EC" id="2.3.1.189" evidence="1"/>
<dbReference type="EMBL" id="AP009152">
    <property type="protein sequence ID" value="BAG28918.1"/>
    <property type="molecule type" value="Genomic_DNA"/>
</dbReference>
<dbReference type="RefSeq" id="WP_012397644.1">
    <property type="nucleotide sequence ID" value="NC_010617.1"/>
</dbReference>
<dbReference type="SMR" id="B2GI63"/>
<dbReference type="STRING" id="378753.KRH_05710"/>
<dbReference type="KEGG" id="krh:KRH_05710"/>
<dbReference type="eggNOG" id="COG0456">
    <property type="taxonomic scope" value="Bacteria"/>
</dbReference>
<dbReference type="eggNOG" id="COG1670">
    <property type="taxonomic scope" value="Bacteria"/>
</dbReference>
<dbReference type="HOGENOM" id="CLU_068014_0_0_11"/>
<dbReference type="OrthoDB" id="9761456at2"/>
<dbReference type="Proteomes" id="UP000008838">
    <property type="component" value="Chromosome"/>
</dbReference>
<dbReference type="GO" id="GO:0035447">
    <property type="term" value="F:mycothiol synthase activity"/>
    <property type="evidence" value="ECO:0007669"/>
    <property type="project" value="UniProtKB-UniRule"/>
</dbReference>
<dbReference type="GO" id="GO:0010125">
    <property type="term" value="P:mycothiol biosynthetic process"/>
    <property type="evidence" value="ECO:0007669"/>
    <property type="project" value="UniProtKB-UniRule"/>
</dbReference>
<dbReference type="CDD" id="cd04301">
    <property type="entry name" value="NAT_SF"/>
    <property type="match status" value="2"/>
</dbReference>
<dbReference type="Gene3D" id="3.40.630.30">
    <property type="match status" value="1"/>
</dbReference>
<dbReference type="HAMAP" id="MF_01698">
    <property type="entry name" value="MshD"/>
    <property type="match status" value="1"/>
</dbReference>
<dbReference type="InterPro" id="IPR016181">
    <property type="entry name" value="Acyl_CoA_acyltransferase"/>
</dbReference>
<dbReference type="InterPro" id="IPR000182">
    <property type="entry name" value="GNAT_dom"/>
</dbReference>
<dbReference type="InterPro" id="IPR017813">
    <property type="entry name" value="Mycothiol_AcTrfase"/>
</dbReference>
<dbReference type="NCBIfam" id="TIGR03448">
    <property type="entry name" value="mycothiol_MshD"/>
    <property type="match status" value="1"/>
</dbReference>
<dbReference type="PANTHER" id="PTHR43072">
    <property type="entry name" value="N-ACETYLTRANSFERASE"/>
    <property type="match status" value="1"/>
</dbReference>
<dbReference type="Pfam" id="PF00583">
    <property type="entry name" value="Acetyltransf_1"/>
    <property type="match status" value="2"/>
</dbReference>
<dbReference type="PIRSF" id="PIRSF021524">
    <property type="entry name" value="MSH_acetyltransferase"/>
    <property type="match status" value="1"/>
</dbReference>
<dbReference type="SUPFAM" id="SSF55729">
    <property type="entry name" value="Acyl-CoA N-acyltransferases (Nat)"/>
    <property type="match status" value="1"/>
</dbReference>
<dbReference type="PROSITE" id="PS51186">
    <property type="entry name" value="GNAT"/>
    <property type="match status" value="2"/>
</dbReference>
<name>MSHD_KOCRD</name>
<keyword id="KW-0012">Acyltransferase</keyword>
<keyword id="KW-1185">Reference proteome</keyword>
<keyword id="KW-0677">Repeat</keyword>
<keyword id="KW-0808">Transferase</keyword>
<accession>B2GI63</accession>
<evidence type="ECO:0000255" key="1">
    <source>
        <dbReference type="HAMAP-Rule" id="MF_01698"/>
    </source>
</evidence>
<reference key="1">
    <citation type="journal article" date="2008" name="J. Bacteriol.">
        <title>Complete genome sequence of the soil actinomycete Kocuria rhizophila.</title>
        <authorList>
            <person name="Takarada H."/>
            <person name="Sekine M."/>
            <person name="Kosugi H."/>
            <person name="Matsuo Y."/>
            <person name="Fujisawa T."/>
            <person name="Omata S."/>
            <person name="Kishi E."/>
            <person name="Shimizu A."/>
            <person name="Tsukatani N."/>
            <person name="Tanikawa S."/>
            <person name="Fujita N."/>
            <person name="Harayama S."/>
        </authorList>
    </citation>
    <scope>NUCLEOTIDE SEQUENCE [LARGE SCALE GENOMIC DNA]</scope>
    <source>
        <strain>ATCC 9341 / DSM 348 / NBRC 103217 / DC2201</strain>
    </source>
</reference>
<gene>
    <name evidence="1" type="primary">mshD</name>
    <name type="ordered locus">KRH_05710</name>
</gene>
<organism>
    <name type="scientific">Kocuria rhizophila (strain ATCC 9341 / DSM 348 / NBRC 103217 / DC2201)</name>
    <dbReference type="NCBI Taxonomy" id="378753"/>
    <lineage>
        <taxon>Bacteria</taxon>
        <taxon>Bacillati</taxon>
        <taxon>Actinomycetota</taxon>
        <taxon>Actinomycetes</taxon>
        <taxon>Micrococcales</taxon>
        <taxon>Micrococcaceae</taxon>
        <taxon>Kocuria</taxon>
    </lineage>
</organism>
<proteinExistence type="inferred from homology"/>
<feature type="chain" id="PRO_0000400262" description="Mycothiol acetyltransferase">
    <location>
        <begin position="1"/>
        <end position="303"/>
    </location>
</feature>
<feature type="domain" description="N-acetyltransferase 1" evidence="1">
    <location>
        <begin position="3"/>
        <end position="152"/>
    </location>
</feature>
<feature type="domain" description="N-acetyltransferase 2" evidence="1">
    <location>
        <begin position="155"/>
        <end position="303"/>
    </location>
</feature>
<feature type="binding site" evidence="1">
    <location>
        <position position="35"/>
    </location>
    <ligand>
        <name>1D-myo-inositol 2-(L-cysteinylamino)-2-deoxy-alpha-D-glucopyranoside</name>
        <dbReference type="ChEBI" id="CHEBI:58887"/>
    </ligand>
</feature>
<feature type="binding site" evidence="1">
    <location>
        <begin position="79"/>
        <end position="81"/>
    </location>
    <ligand>
        <name>acetyl-CoA</name>
        <dbReference type="ChEBI" id="CHEBI:57288"/>
        <label>1</label>
    </ligand>
</feature>
<feature type="binding site" evidence="1">
    <location>
        <position position="182"/>
    </location>
    <ligand>
        <name>1D-myo-inositol 2-(L-cysteinylamino)-2-deoxy-alpha-D-glucopyranoside</name>
        <dbReference type="ChEBI" id="CHEBI:58887"/>
    </ligand>
</feature>
<feature type="binding site" evidence="1">
    <location>
        <position position="224"/>
    </location>
    <ligand>
        <name>1D-myo-inositol 2-(L-cysteinylamino)-2-deoxy-alpha-D-glucopyranoside</name>
        <dbReference type="ChEBI" id="CHEBI:58887"/>
    </ligand>
</feature>
<feature type="binding site" evidence="1">
    <location>
        <position position="237"/>
    </location>
    <ligand>
        <name>1D-myo-inositol 2-(L-cysteinylamino)-2-deoxy-alpha-D-glucopyranoside</name>
        <dbReference type="ChEBI" id="CHEBI:58887"/>
    </ligand>
</feature>
<feature type="binding site" evidence="1">
    <location>
        <begin position="241"/>
        <end position="243"/>
    </location>
    <ligand>
        <name>acetyl-CoA</name>
        <dbReference type="ChEBI" id="CHEBI:57288"/>
        <label>2</label>
    </ligand>
</feature>
<feature type="binding site" evidence="1">
    <location>
        <begin position="248"/>
        <end position="254"/>
    </location>
    <ligand>
        <name>acetyl-CoA</name>
        <dbReference type="ChEBI" id="CHEBI:57288"/>
        <label>2</label>
    </ligand>
</feature>
<feature type="binding site" evidence="1">
    <location>
        <position position="275"/>
    </location>
    <ligand>
        <name>1D-myo-inositol 2-(L-cysteinylamino)-2-deoxy-alpha-D-glucopyranoside</name>
        <dbReference type="ChEBI" id="CHEBI:58887"/>
    </ligand>
</feature>